<organism>
    <name type="scientific">Oryza sativa subsp. japonica</name>
    <name type="common">Rice</name>
    <dbReference type="NCBI Taxonomy" id="39947"/>
    <lineage>
        <taxon>Eukaryota</taxon>
        <taxon>Viridiplantae</taxon>
        <taxon>Streptophyta</taxon>
        <taxon>Embryophyta</taxon>
        <taxon>Tracheophyta</taxon>
        <taxon>Spermatophyta</taxon>
        <taxon>Magnoliopsida</taxon>
        <taxon>Liliopsida</taxon>
        <taxon>Poales</taxon>
        <taxon>Poaceae</taxon>
        <taxon>BOP clade</taxon>
        <taxon>Oryzoideae</taxon>
        <taxon>Oryzeae</taxon>
        <taxon>Oryzinae</taxon>
        <taxon>Oryza</taxon>
        <taxon>Oryza sativa</taxon>
    </lineage>
</organism>
<feature type="transit peptide" description="Chloroplast" evidence="2">
    <location>
        <begin position="1"/>
        <end position="55"/>
    </location>
</feature>
<feature type="chain" id="PRO_0000394265" description="Magnesium transporter MRS2-A, chloroplastic">
    <location>
        <begin position="56"/>
        <end position="474"/>
    </location>
</feature>
<feature type="transmembrane region" description="Helical" evidence="2">
    <location>
        <begin position="412"/>
        <end position="432"/>
    </location>
</feature>
<feature type="transmembrane region" description="Helical" evidence="2">
    <location>
        <begin position="444"/>
        <end position="464"/>
    </location>
</feature>
<feature type="region of interest" description="Disordered" evidence="3">
    <location>
        <begin position="79"/>
        <end position="129"/>
    </location>
</feature>
<feature type="short sequence motif" description="Required for magnesium transport activity">
    <location>
        <begin position="432"/>
        <end position="434"/>
    </location>
</feature>
<feature type="compositionally biased region" description="Acidic residues" evidence="3">
    <location>
        <begin position="88"/>
        <end position="103"/>
    </location>
</feature>
<feature type="compositionally biased region" description="Basic and acidic residues" evidence="3">
    <location>
        <begin position="104"/>
        <end position="122"/>
    </location>
</feature>
<feature type="sequence conflict" description="In Ref. 6; AK100086." evidence="4" ref="6">
    <original>M</original>
    <variation>V</variation>
    <location>
        <position position="346"/>
    </location>
</feature>
<name>MRS2A_ORYSJ</name>
<comment type="function">
    <text evidence="1">Magnesium transporter that may mediate the influx of magnesium in chloroplast.</text>
</comment>
<comment type="subcellular location">
    <subcellularLocation>
        <location>Plastid</location>
    </subcellularLocation>
    <subcellularLocation>
        <location evidence="4">Plastid</location>
        <location evidence="4">Chloroplast membrane</location>
        <topology evidence="4">Multi-pass membrane protein</topology>
    </subcellularLocation>
</comment>
<comment type="similarity">
    <text evidence="4">Belongs to the CorA metal ion transporter (MIT) (TC 1.A.35.5) family.</text>
</comment>
<comment type="sequence caution" evidence="4">
    <conflict type="erroneous gene model prediction">
        <sequence resource="EMBL-CDS" id="ABF98245"/>
    </conflict>
</comment>
<accession>Q9AUK4</accession>
<accession>A0A0P0W1J9</accession>
<accession>Q10F20</accession>
<accession>Q10F21</accession>
<dbReference type="EMBL" id="AC087851">
    <property type="protein sequence ID" value="AAK14424.1"/>
    <property type="molecule type" value="Genomic_DNA"/>
</dbReference>
<dbReference type="EMBL" id="DP000009">
    <property type="protein sequence ID" value="ABF98244.1"/>
    <property type="molecule type" value="Genomic_DNA"/>
</dbReference>
<dbReference type="EMBL" id="DP000009">
    <property type="protein sequence ID" value="ABF98245.1"/>
    <property type="status" value="ALT_SEQ"/>
    <property type="molecule type" value="Genomic_DNA"/>
</dbReference>
<dbReference type="EMBL" id="AP008209">
    <property type="protein sequence ID" value="BAF12833.1"/>
    <property type="molecule type" value="Genomic_DNA"/>
</dbReference>
<dbReference type="EMBL" id="AP014959">
    <property type="protein sequence ID" value="BAS85790.1"/>
    <property type="molecule type" value="Genomic_DNA"/>
</dbReference>
<dbReference type="EMBL" id="CM000140">
    <property type="protein sequence ID" value="EEE59710.1"/>
    <property type="molecule type" value="Genomic_DNA"/>
</dbReference>
<dbReference type="EMBL" id="AK100086">
    <property type="status" value="NOT_ANNOTATED_CDS"/>
    <property type="molecule type" value="mRNA"/>
</dbReference>
<dbReference type="RefSeq" id="XP_015633311.1">
    <property type="nucleotide sequence ID" value="XM_015777825.1"/>
</dbReference>
<dbReference type="SMR" id="Q9AUK4"/>
<dbReference type="FunCoup" id="Q9AUK4">
    <property type="interactions" value="928"/>
</dbReference>
<dbReference type="STRING" id="39947.Q9AUK4"/>
<dbReference type="PaxDb" id="39947-Q9AUK4"/>
<dbReference type="EnsemblPlants" id="Os03t0684400-01">
    <property type="protein sequence ID" value="Os03t0684400-01"/>
    <property type="gene ID" value="Os03g0684400"/>
</dbReference>
<dbReference type="Gramene" id="Os03t0684400-01">
    <property type="protein sequence ID" value="Os03t0684400-01"/>
    <property type="gene ID" value="Os03g0684400"/>
</dbReference>
<dbReference type="KEGG" id="dosa:Os03g0684400"/>
<dbReference type="eggNOG" id="KOG2662">
    <property type="taxonomic scope" value="Eukaryota"/>
</dbReference>
<dbReference type="HOGENOM" id="CLU_025144_0_0_1"/>
<dbReference type="InParanoid" id="Q9AUK4"/>
<dbReference type="OMA" id="TLLIHMF"/>
<dbReference type="OrthoDB" id="10251508at2759"/>
<dbReference type="Proteomes" id="UP000000763">
    <property type="component" value="Chromosome 3"/>
</dbReference>
<dbReference type="Proteomes" id="UP000007752">
    <property type="component" value="Chromosome 3"/>
</dbReference>
<dbReference type="Proteomes" id="UP000059680">
    <property type="component" value="Chromosome 3"/>
</dbReference>
<dbReference type="GO" id="GO:0009941">
    <property type="term" value="C:chloroplast envelope"/>
    <property type="evidence" value="ECO:0000318"/>
    <property type="project" value="GO_Central"/>
</dbReference>
<dbReference type="GO" id="GO:0031969">
    <property type="term" value="C:chloroplast membrane"/>
    <property type="evidence" value="ECO:0007669"/>
    <property type="project" value="UniProtKB-SubCell"/>
</dbReference>
<dbReference type="GO" id="GO:0015095">
    <property type="term" value="F:magnesium ion transmembrane transporter activity"/>
    <property type="evidence" value="ECO:0000318"/>
    <property type="project" value="GO_Central"/>
</dbReference>
<dbReference type="GO" id="GO:0010960">
    <property type="term" value="P:magnesium ion homeostasis"/>
    <property type="evidence" value="ECO:0007669"/>
    <property type="project" value="EnsemblPlants"/>
</dbReference>
<dbReference type="GO" id="GO:0015693">
    <property type="term" value="P:magnesium ion transport"/>
    <property type="evidence" value="ECO:0000318"/>
    <property type="project" value="GO_Central"/>
</dbReference>
<dbReference type="GO" id="GO:0010117">
    <property type="term" value="P:photoprotection"/>
    <property type="evidence" value="ECO:0007669"/>
    <property type="project" value="EnsemblPlants"/>
</dbReference>
<dbReference type="GO" id="GO:0010027">
    <property type="term" value="P:thylakoid membrane organization"/>
    <property type="evidence" value="ECO:0007669"/>
    <property type="project" value="EnsemblPlants"/>
</dbReference>
<dbReference type="CDD" id="cd12823">
    <property type="entry name" value="Mrs2_Mfm1p-like"/>
    <property type="match status" value="1"/>
</dbReference>
<dbReference type="FunFam" id="1.20.58.340:FF:000013">
    <property type="entry name" value="Magnesium transporter MRS2-11, chloroplastic"/>
    <property type="match status" value="1"/>
</dbReference>
<dbReference type="FunFam" id="2.40.128.330:FF:000004">
    <property type="entry name" value="Magnesium transporter MRS2-11, chloroplastic"/>
    <property type="match status" value="1"/>
</dbReference>
<dbReference type="Gene3D" id="2.40.128.330">
    <property type="match status" value="1"/>
</dbReference>
<dbReference type="Gene3D" id="1.20.58.340">
    <property type="entry name" value="Magnesium transport protein CorA, transmembrane region"/>
    <property type="match status" value="1"/>
</dbReference>
<dbReference type="InterPro" id="IPR045863">
    <property type="entry name" value="CorA_TM1_TM2"/>
</dbReference>
<dbReference type="InterPro" id="IPR039204">
    <property type="entry name" value="MRS2-like"/>
</dbReference>
<dbReference type="PANTHER" id="PTHR13890:SF0">
    <property type="entry name" value="MAGNESIUM TRANSPORTER MRS2 HOMOLOG, MITOCHONDRIAL"/>
    <property type="match status" value="1"/>
</dbReference>
<dbReference type="PANTHER" id="PTHR13890">
    <property type="entry name" value="RNA SPLICING PROTEIN MRS2, MITOCHONDRIAL"/>
    <property type="match status" value="1"/>
</dbReference>
<dbReference type="Pfam" id="PF22099">
    <property type="entry name" value="MRS2-like"/>
    <property type="match status" value="1"/>
</dbReference>
<dbReference type="SUPFAM" id="SSF144083">
    <property type="entry name" value="Magnesium transport protein CorA, transmembrane region"/>
    <property type="match status" value="1"/>
</dbReference>
<keyword id="KW-0150">Chloroplast</keyword>
<keyword id="KW-0406">Ion transport</keyword>
<keyword id="KW-0460">Magnesium</keyword>
<keyword id="KW-0472">Membrane</keyword>
<keyword id="KW-0934">Plastid</keyword>
<keyword id="KW-1185">Reference proteome</keyword>
<keyword id="KW-0809">Transit peptide</keyword>
<keyword id="KW-0812">Transmembrane</keyword>
<keyword id="KW-1133">Transmembrane helix</keyword>
<keyword id="KW-0813">Transport</keyword>
<reference key="1">
    <citation type="journal article" date="2005" name="Genome Res.">
        <title>Sequence, annotation, and analysis of synteny between rice chromosome 3 and diverged grass species.</title>
        <authorList>
            <consortium name="The rice chromosome 3 sequencing consortium"/>
            <person name="Buell C.R."/>
            <person name="Yuan Q."/>
            <person name="Ouyang S."/>
            <person name="Liu J."/>
            <person name="Zhu W."/>
            <person name="Wang A."/>
            <person name="Maiti R."/>
            <person name="Haas B."/>
            <person name="Wortman J."/>
            <person name="Pertea M."/>
            <person name="Jones K.M."/>
            <person name="Kim M."/>
            <person name="Overton L."/>
            <person name="Tsitrin T."/>
            <person name="Fadrosh D."/>
            <person name="Bera J."/>
            <person name="Weaver B."/>
            <person name="Jin S."/>
            <person name="Johri S."/>
            <person name="Reardon M."/>
            <person name="Webb K."/>
            <person name="Hill J."/>
            <person name="Moffat K."/>
            <person name="Tallon L."/>
            <person name="Van Aken S."/>
            <person name="Lewis M."/>
            <person name="Utterback T."/>
            <person name="Feldblyum T."/>
            <person name="Zismann V."/>
            <person name="Iobst S."/>
            <person name="Hsiao J."/>
            <person name="de Vazeille A.R."/>
            <person name="Salzberg S.L."/>
            <person name="White O."/>
            <person name="Fraser C.M."/>
            <person name="Yu Y."/>
            <person name="Kim H."/>
            <person name="Rambo T."/>
            <person name="Currie J."/>
            <person name="Collura K."/>
            <person name="Kernodle-Thompson S."/>
            <person name="Wei F."/>
            <person name="Kudrna K."/>
            <person name="Ammiraju J.S.S."/>
            <person name="Luo M."/>
            <person name="Goicoechea J.L."/>
            <person name="Wing R.A."/>
            <person name="Henry D."/>
            <person name="Oates R."/>
            <person name="Palmer M."/>
            <person name="Pries G."/>
            <person name="Saski C."/>
            <person name="Simmons J."/>
            <person name="Soderlund C."/>
            <person name="Nelson W."/>
            <person name="de la Bastide M."/>
            <person name="Spiegel L."/>
            <person name="Nascimento L."/>
            <person name="Huang E."/>
            <person name="Preston R."/>
            <person name="Zutavern T."/>
            <person name="Palmer L."/>
            <person name="O'Shaughnessy A."/>
            <person name="Dike S."/>
            <person name="McCombie W.R."/>
            <person name="Minx P."/>
            <person name="Cordum H."/>
            <person name="Wilson R."/>
            <person name="Jin W."/>
            <person name="Lee H.R."/>
            <person name="Jiang J."/>
            <person name="Jackson S."/>
        </authorList>
    </citation>
    <scope>NUCLEOTIDE SEQUENCE [LARGE SCALE GENOMIC DNA]</scope>
    <source>
        <strain>cv. Nipponbare</strain>
    </source>
</reference>
<reference key="2">
    <citation type="journal article" date="2005" name="Nature">
        <title>The map-based sequence of the rice genome.</title>
        <authorList>
            <consortium name="International rice genome sequencing project (IRGSP)"/>
        </authorList>
    </citation>
    <scope>NUCLEOTIDE SEQUENCE [LARGE SCALE GENOMIC DNA]</scope>
    <source>
        <strain>cv. Nipponbare</strain>
    </source>
</reference>
<reference key="3">
    <citation type="journal article" date="2008" name="Nucleic Acids Res.">
        <title>The rice annotation project database (RAP-DB): 2008 update.</title>
        <authorList>
            <consortium name="The rice annotation project (RAP)"/>
        </authorList>
    </citation>
    <scope>GENOME REANNOTATION</scope>
    <source>
        <strain>cv. Nipponbare</strain>
    </source>
</reference>
<reference key="4">
    <citation type="journal article" date="2013" name="Rice">
        <title>Improvement of the Oryza sativa Nipponbare reference genome using next generation sequence and optical map data.</title>
        <authorList>
            <person name="Kawahara Y."/>
            <person name="de la Bastide M."/>
            <person name="Hamilton J.P."/>
            <person name="Kanamori H."/>
            <person name="McCombie W.R."/>
            <person name="Ouyang S."/>
            <person name="Schwartz D.C."/>
            <person name="Tanaka T."/>
            <person name="Wu J."/>
            <person name="Zhou S."/>
            <person name="Childs K.L."/>
            <person name="Davidson R.M."/>
            <person name="Lin H."/>
            <person name="Quesada-Ocampo L."/>
            <person name="Vaillancourt B."/>
            <person name="Sakai H."/>
            <person name="Lee S.S."/>
            <person name="Kim J."/>
            <person name="Numa H."/>
            <person name="Itoh T."/>
            <person name="Buell C.R."/>
            <person name="Matsumoto T."/>
        </authorList>
    </citation>
    <scope>GENOME REANNOTATION</scope>
    <source>
        <strain>cv. Nipponbare</strain>
    </source>
</reference>
<reference key="5">
    <citation type="journal article" date="2005" name="PLoS Biol.">
        <title>The genomes of Oryza sativa: a history of duplications.</title>
        <authorList>
            <person name="Yu J."/>
            <person name="Wang J."/>
            <person name="Lin W."/>
            <person name="Li S."/>
            <person name="Li H."/>
            <person name="Zhou J."/>
            <person name="Ni P."/>
            <person name="Dong W."/>
            <person name="Hu S."/>
            <person name="Zeng C."/>
            <person name="Zhang J."/>
            <person name="Zhang Y."/>
            <person name="Li R."/>
            <person name="Xu Z."/>
            <person name="Li S."/>
            <person name="Li X."/>
            <person name="Zheng H."/>
            <person name="Cong L."/>
            <person name="Lin L."/>
            <person name="Yin J."/>
            <person name="Geng J."/>
            <person name="Li G."/>
            <person name="Shi J."/>
            <person name="Liu J."/>
            <person name="Lv H."/>
            <person name="Li J."/>
            <person name="Wang J."/>
            <person name="Deng Y."/>
            <person name="Ran L."/>
            <person name="Shi X."/>
            <person name="Wang X."/>
            <person name="Wu Q."/>
            <person name="Li C."/>
            <person name="Ren X."/>
            <person name="Wang J."/>
            <person name="Wang X."/>
            <person name="Li D."/>
            <person name="Liu D."/>
            <person name="Zhang X."/>
            <person name="Ji Z."/>
            <person name="Zhao W."/>
            <person name="Sun Y."/>
            <person name="Zhang Z."/>
            <person name="Bao J."/>
            <person name="Han Y."/>
            <person name="Dong L."/>
            <person name="Ji J."/>
            <person name="Chen P."/>
            <person name="Wu S."/>
            <person name="Liu J."/>
            <person name="Xiao Y."/>
            <person name="Bu D."/>
            <person name="Tan J."/>
            <person name="Yang L."/>
            <person name="Ye C."/>
            <person name="Zhang J."/>
            <person name="Xu J."/>
            <person name="Zhou Y."/>
            <person name="Yu Y."/>
            <person name="Zhang B."/>
            <person name="Zhuang S."/>
            <person name="Wei H."/>
            <person name="Liu B."/>
            <person name="Lei M."/>
            <person name="Yu H."/>
            <person name="Li Y."/>
            <person name="Xu H."/>
            <person name="Wei S."/>
            <person name="He X."/>
            <person name="Fang L."/>
            <person name="Zhang Z."/>
            <person name="Zhang Y."/>
            <person name="Huang X."/>
            <person name="Su Z."/>
            <person name="Tong W."/>
            <person name="Li J."/>
            <person name="Tong Z."/>
            <person name="Li S."/>
            <person name="Ye J."/>
            <person name="Wang L."/>
            <person name="Fang L."/>
            <person name="Lei T."/>
            <person name="Chen C.-S."/>
            <person name="Chen H.-C."/>
            <person name="Xu Z."/>
            <person name="Li H."/>
            <person name="Huang H."/>
            <person name="Zhang F."/>
            <person name="Xu H."/>
            <person name="Li N."/>
            <person name="Zhao C."/>
            <person name="Li S."/>
            <person name="Dong L."/>
            <person name="Huang Y."/>
            <person name="Li L."/>
            <person name="Xi Y."/>
            <person name="Qi Q."/>
            <person name="Li W."/>
            <person name="Zhang B."/>
            <person name="Hu W."/>
            <person name="Zhang Y."/>
            <person name="Tian X."/>
            <person name="Jiao Y."/>
            <person name="Liang X."/>
            <person name="Jin J."/>
            <person name="Gao L."/>
            <person name="Zheng W."/>
            <person name="Hao B."/>
            <person name="Liu S.-M."/>
            <person name="Wang W."/>
            <person name="Yuan L."/>
            <person name="Cao M."/>
            <person name="McDermott J."/>
            <person name="Samudrala R."/>
            <person name="Wang J."/>
            <person name="Wong G.K.-S."/>
            <person name="Yang H."/>
        </authorList>
    </citation>
    <scope>NUCLEOTIDE SEQUENCE [LARGE SCALE GENOMIC DNA]</scope>
    <source>
        <strain>cv. Nipponbare</strain>
    </source>
</reference>
<reference key="6">
    <citation type="journal article" date="2003" name="Science">
        <title>Collection, mapping, and annotation of over 28,000 cDNA clones from japonica rice.</title>
        <authorList>
            <consortium name="The rice full-length cDNA consortium"/>
        </authorList>
    </citation>
    <scope>NUCLEOTIDE SEQUENCE [LARGE SCALE MRNA]</scope>
    <source>
        <strain>cv. Nipponbare</strain>
    </source>
</reference>
<reference key="7">
    <citation type="journal article" date="2009" name="Plant Cell">
        <title>A root-expressed magnesium transporter of the MRS2/MGT gene family in Arabidopsis thaliana allows for growth in low-Mg2+ environments.</title>
        <authorList>
            <person name="Gebert M."/>
            <person name="Meschenmoser K."/>
            <person name="Svidova S."/>
            <person name="Weghuber J."/>
            <person name="Schweyen R."/>
            <person name="Eifler K."/>
            <person name="Lenz H."/>
            <person name="Weyand K."/>
            <person name="Knoop V."/>
        </authorList>
    </citation>
    <scope>GENE FAMILY</scope>
</reference>
<sequence length="474" mass="51892">MASVSSSPSYSSQAAVLLLLHQPPHQHGHGGACLRYRGSQSQGRGNAVATSLGLSAAGRGGAGGLLLLPPLPALRAAEGKDGRAVTKDEEEEAAAAAVEEEGEVEVRREEDKPGDDGSREAAARGSGSGRFSADYISLGIREPVYEVIEVKSNGRMSTKKISRRQLLKSSGLRLRDTRSVDPSLWLMNSMPSLLVREQAILVNLGSLRAIAMHERVLIFNYNSPGGKAFLDSLLPRLNPRNINGGPAMPFQLEVVEAALLSRIQRLERRLMRIEPRVGALLEVLPNRLTADVLEQLRLSKQALVELGSRAGDLKQMLIDLLDDPHEIRRICIMGRNCTLDKLSDNMECSVPLEKQIAEEEEEEIEMLLENYLQRCESIHGQAERLLDSAREMEDSIAVNLSSRRLEVSRVELLLQVGTFCVAIGALIAGIFGMNLKSYLETNAWAFWATTGGIVVGAVAGFFIMYSYLKTRKIL</sequence>
<protein>
    <recommendedName>
        <fullName>Magnesium transporter MRS2-A, chloroplastic</fullName>
    </recommendedName>
</protein>
<evidence type="ECO:0000250" key="1"/>
<evidence type="ECO:0000255" key="2"/>
<evidence type="ECO:0000256" key="3">
    <source>
        <dbReference type="SAM" id="MobiDB-lite"/>
    </source>
</evidence>
<evidence type="ECO:0000305" key="4"/>
<gene>
    <name type="primary">MRS2-A</name>
    <name type="ordered locus">Os03g0684400</name>
    <name type="ordered locus">LOC_Os03g48000</name>
    <name type="ORF">OsJ_12139</name>
    <name type="ORF">OSJNBb0072E24.13</name>
</gene>
<proteinExistence type="evidence at transcript level"/>